<proteinExistence type="evidence at protein level"/>
<keyword id="KW-0007">Acetylation</keyword>
<keyword id="KW-0963">Cytoplasm</keyword>
<keyword id="KW-1017">Isopeptide bond</keyword>
<keyword id="KW-0458">Lysosome</keyword>
<keyword id="KW-0472">Membrane</keyword>
<keyword id="KW-0597">Phosphoprotein</keyword>
<keyword id="KW-1185">Reference proteome</keyword>
<keyword id="KW-0677">Repeat</keyword>
<keyword id="KW-0832">Ubl conjugation</keyword>
<keyword id="KW-0853">WD repeat</keyword>
<sequence length="326" mass="35943">MNTTPGTVGSDPVILATAGYDHTVRFWQAHSGICTRTVQHQDSQVNALEITPDRSMIAATGYQHIRMYDLNSNNPNPIISYDGVSKNIASVGFHEDGRWMYTGGEDCTARIWDLRSRNLQCQRIFQVNAPINCVCLHPNQAELIVGDQSGTSHIWDLKTDHNEQLIPEPEFSITSAHIDPDASYMAAVNSAGNCFVWNLTGGIGDEVTQLIPKTKIPAHTRYALQCRFSPDSTLLATCSADQTCKIWRTSNFSLMTELSIKSSNPGESSRGWMWGCAFSGDSQYIVTASSDNLARLWCVETGEIKREYGGHQKAVVCLAFNDSVLG</sequence>
<name>LST8_RAT</name>
<evidence type="ECO:0000250" key="1">
    <source>
        <dbReference type="UniProtKB" id="Q9BVC4"/>
    </source>
</evidence>
<evidence type="ECO:0000250" key="2">
    <source>
        <dbReference type="UniProtKB" id="Q9DCJ1"/>
    </source>
</evidence>
<evidence type="ECO:0000269" key="3">
    <source>
    </source>
</evidence>
<evidence type="ECO:0000305" key="4"/>
<evidence type="ECO:0000312" key="5">
    <source>
        <dbReference type="RGD" id="69242"/>
    </source>
</evidence>
<accession>Q9Z2K5</accession>
<accession>Q4QRA0</accession>
<dbReference type="EMBL" id="AF051155">
    <property type="protein sequence ID" value="AAD03500.2"/>
    <property type="molecule type" value="mRNA"/>
</dbReference>
<dbReference type="EMBL" id="BC097319">
    <property type="protein sequence ID" value="AAH97319.1"/>
    <property type="molecule type" value="mRNA"/>
</dbReference>
<dbReference type="RefSeq" id="NP_071799.2">
    <property type="nucleotide sequence ID" value="NM_022404.2"/>
</dbReference>
<dbReference type="SMR" id="Q9Z2K5"/>
<dbReference type="FunCoup" id="Q9Z2K5">
    <property type="interactions" value="2129"/>
</dbReference>
<dbReference type="STRING" id="10116.ENSRNOP00000014269"/>
<dbReference type="PhosphoSitePlus" id="Q9Z2K5"/>
<dbReference type="PaxDb" id="10116-ENSRNOP00000014269"/>
<dbReference type="GeneID" id="64226"/>
<dbReference type="KEGG" id="rno:64226"/>
<dbReference type="UCSC" id="RGD:69242">
    <property type="organism name" value="rat"/>
</dbReference>
<dbReference type="AGR" id="RGD:69242"/>
<dbReference type="CTD" id="64223"/>
<dbReference type="RGD" id="69242">
    <property type="gene designation" value="Mlst8"/>
</dbReference>
<dbReference type="eggNOG" id="KOG0315">
    <property type="taxonomic scope" value="Eukaryota"/>
</dbReference>
<dbReference type="InParanoid" id="Q9Z2K5"/>
<dbReference type="OrthoDB" id="400at2759"/>
<dbReference type="PhylomeDB" id="Q9Z2K5"/>
<dbReference type="Reactome" id="R-RNO-1257604">
    <property type="pathway name" value="PIP3 activates AKT signaling"/>
</dbReference>
<dbReference type="Reactome" id="R-RNO-1632852">
    <property type="pathway name" value="Macroautophagy"/>
</dbReference>
<dbReference type="Reactome" id="R-RNO-165159">
    <property type="pathway name" value="MTOR signalling"/>
</dbReference>
<dbReference type="Reactome" id="R-RNO-166208">
    <property type="pathway name" value="mTORC1-mediated signalling"/>
</dbReference>
<dbReference type="Reactome" id="R-RNO-3371571">
    <property type="pathway name" value="HSF1-dependent transactivation"/>
</dbReference>
<dbReference type="Reactome" id="R-RNO-380972">
    <property type="pathway name" value="Energy dependent regulation of mTOR by LKB1-AMPK"/>
</dbReference>
<dbReference type="Reactome" id="R-RNO-389357">
    <property type="pathway name" value="CD28 dependent PI3K/Akt signaling"/>
</dbReference>
<dbReference type="Reactome" id="R-RNO-5218920">
    <property type="pathway name" value="VEGFR2 mediated vascular permeability"/>
</dbReference>
<dbReference type="Reactome" id="R-RNO-5628897">
    <property type="pathway name" value="TP53 Regulates Metabolic Genes"/>
</dbReference>
<dbReference type="Reactome" id="R-RNO-6804757">
    <property type="pathway name" value="Regulation of TP53 Degradation"/>
</dbReference>
<dbReference type="Reactome" id="R-RNO-8943724">
    <property type="pathway name" value="Regulation of PTEN gene transcription"/>
</dbReference>
<dbReference type="Reactome" id="R-RNO-9639288">
    <property type="pathway name" value="Amino acids regulate mTORC1"/>
</dbReference>
<dbReference type="Reactome" id="R-RNO-9856530">
    <property type="pathway name" value="High laminar flow shear stress activates signaling by PIEZO1 and PECAM1:CDH5:KDR in endothelial cells"/>
</dbReference>
<dbReference type="PRO" id="PR:Q9Z2K5"/>
<dbReference type="Proteomes" id="UP000002494">
    <property type="component" value="Unplaced"/>
</dbReference>
<dbReference type="GO" id="GO:0005737">
    <property type="term" value="C:cytoplasm"/>
    <property type="evidence" value="ECO:0000314"/>
    <property type="project" value="UniProtKB"/>
</dbReference>
<dbReference type="GO" id="GO:0005765">
    <property type="term" value="C:lysosomal membrane"/>
    <property type="evidence" value="ECO:0007669"/>
    <property type="project" value="UniProtKB-SubCell"/>
</dbReference>
<dbReference type="GO" id="GO:1902554">
    <property type="term" value="C:serine/threonine protein kinase complex"/>
    <property type="evidence" value="ECO:0000266"/>
    <property type="project" value="RGD"/>
</dbReference>
<dbReference type="GO" id="GO:0031931">
    <property type="term" value="C:TORC1 complex"/>
    <property type="evidence" value="ECO:0000266"/>
    <property type="project" value="RGD"/>
</dbReference>
<dbReference type="GO" id="GO:0031932">
    <property type="term" value="C:TORC2 complex"/>
    <property type="evidence" value="ECO:0000250"/>
    <property type="project" value="UniProtKB"/>
</dbReference>
<dbReference type="GO" id="GO:0043539">
    <property type="term" value="F:protein serine/threonine kinase activator activity"/>
    <property type="evidence" value="ECO:0000266"/>
    <property type="project" value="RGD"/>
</dbReference>
<dbReference type="GO" id="GO:0030674">
    <property type="term" value="F:protein-macromolecule adaptor activity"/>
    <property type="evidence" value="ECO:0000266"/>
    <property type="project" value="RGD"/>
</dbReference>
<dbReference type="GO" id="GO:0030838">
    <property type="term" value="P:positive regulation of actin filament polymerization"/>
    <property type="evidence" value="ECO:0000266"/>
    <property type="project" value="RGD"/>
</dbReference>
<dbReference type="GO" id="GO:0032008">
    <property type="term" value="P:positive regulation of TOR signaling"/>
    <property type="evidence" value="ECO:0000266"/>
    <property type="project" value="RGD"/>
</dbReference>
<dbReference type="GO" id="GO:0032956">
    <property type="term" value="P:regulation of actin cytoskeleton organization"/>
    <property type="evidence" value="ECO:0000266"/>
    <property type="project" value="RGD"/>
</dbReference>
<dbReference type="GO" id="GO:0031929">
    <property type="term" value="P:TOR signaling"/>
    <property type="evidence" value="ECO:0000318"/>
    <property type="project" value="GO_Central"/>
</dbReference>
<dbReference type="GO" id="GO:0038202">
    <property type="term" value="P:TORC1 signaling"/>
    <property type="evidence" value="ECO:0000266"/>
    <property type="project" value="RGD"/>
</dbReference>
<dbReference type="GO" id="GO:0038203">
    <property type="term" value="P:TORC2 signaling"/>
    <property type="evidence" value="ECO:0000250"/>
    <property type="project" value="UniProtKB"/>
</dbReference>
<dbReference type="CDD" id="cd00200">
    <property type="entry name" value="WD40"/>
    <property type="match status" value="1"/>
</dbReference>
<dbReference type="FunFam" id="2.130.10.10:FF:000086">
    <property type="entry name" value="target of rapamycin complex subunit LST8"/>
    <property type="match status" value="1"/>
</dbReference>
<dbReference type="Gene3D" id="2.130.10.10">
    <property type="entry name" value="YVTN repeat-like/Quinoprotein amine dehydrogenase"/>
    <property type="match status" value="1"/>
</dbReference>
<dbReference type="InterPro" id="IPR020472">
    <property type="entry name" value="G-protein_beta_WD-40_rep"/>
</dbReference>
<dbReference type="InterPro" id="IPR037588">
    <property type="entry name" value="MLST8"/>
</dbReference>
<dbReference type="InterPro" id="IPR011047">
    <property type="entry name" value="Quinoprotein_ADH-like_sf"/>
</dbReference>
<dbReference type="InterPro" id="IPR015943">
    <property type="entry name" value="WD40/YVTN_repeat-like_dom_sf"/>
</dbReference>
<dbReference type="InterPro" id="IPR019775">
    <property type="entry name" value="WD40_repeat_CS"/>
</dbReference>
<dbReference type="InterPro" id="IPR001680">
    <property type="entry name" value="WD40_rpt"/>
</dbReference>
<dbReference type="PANTHER" id="PTHR19842">
    <property type="entry name" value="G BETA-LIKE PROTEIN GBL"/>
    <property type="match status" value="1"/>
</dbReference>
<dbReference type="PANTHER" id="PTHR19842:SF0">
    <property type="entry name" value="TARGET OF RAPAMYCIN COMPLEX SUBUNIT LST8"/>
    <property type="match status" value="1"/>
</dbReference>
<dbReference type="Pfam" id="PF00400">
    <property type="entry name" value="WD40"/>
    <property type="match status" value="5"/>
</dbReference>
<dbReference type="PRINTS" id="PR00320">
    <property type="entry name" value="GPROTEINBRPT"/>
</dbReference>
<dbReference type="SMART" id="SM00320">
    <property type="entry name" value="WD40"/>
    <property type="match status" value="6"/>
</dbReference>
<dbReference type="SUPFAM" id="SSF50998">
    <property type="entry name" value="Quinoprotein alcohol dehydrogenase-like"/>
    <property type="match status" value="1"/>
</dbReference>
<dbReference type="PROSITE" id="PS00678">
    <property type="entry name" value="WD_REPEATS_1"/>
    <property type="match status" value="1"/>
</dbReference>
<dbReference type="PROSITE" id="PS50082">
    <property type="entry name" value="WD_REPEATS_2"/>
    <property type="match status" value="3"/>
</dbReference>
<dbReference type="PROSITE" id="PS50294">
    <property type="entry name" value="WD_REPEATS_REGION"/>
    <property type="match status" value="1"/>
</dbReference>
<protein>
    <recommendedName>
        <fullName evidence="4">Target of rapamycin complex subunit LST8</fullName>
        <shortName>TORC subunit LST8</shortName>
    </recommendedName>
    <alternativeName>
        <fullName>G protein beta subunit-like</fullName>
        <shortName>Protein GbetaL</shortName>
    </alternativeName>
    <alternativeName>
        <fullName>Mammalian lethal with SEC13 protein 8</fullName>
        <shortName>mLST8</shortName>
    </alternativeName>
</protein>
<comment type="function">
    <text evidence="1">Subunit of both mTORC1 and mTORC2, which regulates cell growth and survival in response to nutrient and hormonal signals. mTORC1 is activated in response to growth factors or amino acids. In response to nutrients, mTORC1 is recruited to the lysosome membrane and promotes protein, lipid and nucleotide synthesis by phosphorylating several substrates, such as ribosomal protein S6 kinase (RPS6KB1 and RPS6KB2) and EIF4EBP1 (4E-BP1). In the same time, it inhibits catabolic pathways by phosphorylating the autophagy initiation components ULK1 and ATG13, as well as transcription factor TFEB, a master regulators of lysosomal biogenesis and autophagy. The mTORC1 complex is inhibited in response to starvation and amino acid depletion. Within mTORC1, MLST8 interacts directly with MTOR and enhances its kinase activity. In nutrient-poor conditions, stabilizes the MTOR-RPTOR interaction and favors RPTOR-mediated inhibition of MTOR activity. As part of the mTORC2 complex, transduces signals from growth factors to pathways involved in proliferation, cytoskeletal organization, lipogenesis and anabolic output. mTORC2 is also activated by growth factors, but seems to be nutrient-insensitive. In response to growth factors, mTORC2 phosphorylates and activates AGC protein kinase family members, including AKT (AKT1, AKT2 and AKT3), PKC (PRKCA, PRKCB and PRKCE) and SGK1. mTORC2 functions upstream of Rho GTPases to regulate the actin cytoskeleton, probably by activating one or more Rho-type guanine nucleotide exchange factors. mTORC2 promotes the serum-induced formation of stress-fibers or F-actin. mTORC2 plays a critical role in AKT1 activation by mediating phosphorylation of different sites depending on the context, such as 'Thr-450', 'Ser-473', 'Ser-477' or 'Thr-479', facilitating the phosphorylation of the activation loop of AKT1 on 'Thr-308' by PDPK1/PDK1 which is a prerequisite for full activation. mTORC2 regulates the phosphorylation of SGK1 at 'Ser-422'. mTORC2 also modulates the phosphorylation of PRKCA on 'Ser-657'. Within mTORC2, MLST8 acts as a bridge between MAPKAP1/SIN1 and MTOR.</text>
</comment>
<comment type="subunit">
    <text evidence="1">Part of the mechanistic target of rapamycin complex 1 (mTORC1) which contains MTOR, MLST8 and RPTOR. mTORC1 associates with AKT1S1/PRAS40, which inhibits its activity. mTORC1 binds to and is inhibited by FKBP12-rapamycin. Within mTORC1, interacts directly with MTOR and RPTOR. Component of the mechanistic target of rapamycin complex 2 (mTORC2), consisting in two heterotretramers composed of MTOR, MLST8, RICTOR and MAPKAP1/SIN1. Contrary to mTORC1, mTORC2 does not bind to and is not sensitive to FKBP12-rapamycin. mTORC1 and mTORC2 associate with DEPTOR, which regulates their activity. Interacts with RHEB. Interacts with MEAK7. Interacts with SIK3. Interacts with SLC38A7; this interaction promotes the recruitment of mTORC1 to the lysosome and its subsequent activation.</text>
</comment>
<comment type="subcellular location">
    <subcellularLocation>
        <location evidence="1">Lysosome membrane</location>
    </subcellularLocation>
    <subcellularLocation>
        <location evidence="3">Cytoplasm</location>
    </subcellularLocation>
    <text evidence="1">Targeting to lysosomal membrane depends on amino acid availability: mTORC1 is recruited to lysosome membranes via interaction with GTP-bound form of RagA/RRAGA (or RagB/RRAGB) in complex with the GDP-bound form of RagC/RRAGC (or RagD/RRAGD), promoting its mTORC1 recruitment to the lysosomes.</text>
</comment>
<comment type="tissue specificity">
    <text evidence="3">Expressed at highest levels in the brain and testis, followed by lung, heart, kidney, skeletal muscle, spleen and liver. Also expressed in epididymal, abdominal and brown fat, small intestine and pancreas.</text>
</comment>
<comment type="induction">
    <text evidence="3">By insulin in adipocytes (at protein level).</text>
</comment>
<comment type="PTM">
    <text evidence="1">Phosphorylation at Thr-51 by CDK1 promotes ubiquitination by the SCF(FBXW7) complex, followed by degradation.</text>
</comment>
<comment type="PTM">
    <text evidence="1">Ubiquitination by the SCF(FBXW7) and SCF(FBXW11) complexes following phosphorylation at Thr-51 by CDK1, leads to its degradation by the proteasome. Ubiquitination at Lys-305 and Lys-313 by TRAF2 via 'Lys-63'-linked polyubiquitin chains inhibits formation of the mTORC2 complex, while promoting formation of the mTORC1 complex: ubiquitination disrupts the interaction between MLST8 and MAPKAP1/SIN1 to favor mTORC1 assembly. Deubiquitination at Lys-305 and Lys-313 by OTUD7B promotes MLST8 interaction with MAPKAP1/SIN1, facilitating mTORC2 assembly.</text>
</comment>
<comment type="PTM">
    <text evidence="2">Sumoylation with SUMO1, SUMO2 and SUMO3 promotes assembly of both mTORC1 and mTORC2 complexes.</text>
</comment>
<comment type="similarity">
    <text evidence="4">Belongs to the WD repeat LST8 family.</text>
</comment>
<gene>
    <name evidence="5" type="primary">Mlst8</name>
    <name type="synonym">Gbl</name>
    <name type="synonym">Lst8</name>
</gene>
<feature type="chain" id="PRO_0000326501" description="Target of rapamycin complex subunit LST8">
    <location>
        <begin position="1"/>
        <end position="326"/>
    </location>
</feature>
<feature type="repeat" description="WD 1">
    <location>
        <begin position="1"/>
        <end position="37"/>
    </location>
</feature>
<feature type="repeat" description="WD 2">
    <location>
        <begin position="40"/>
        <end position="80"/>
    </location>
</feature>
<feature type="repeat" description="WD 3">
    <location>
        <begin position="83"/>
        <end position="122"/>
    </location>
</feature>
<feature type="repeat" description="WD 4">
    <location>
        <begin position="126"/>
        <end position="165"/>
    </location>
</feature>
<feature type="repeat" description="WD 5">
    <location>
        <begin position="168"/>
        <end position="207"/>
    </location>
</feature>
<feature type="repeat" description="WD 6">
    <location>
        <begin position="218"/>
        <end position="257"/>
    </location>
</feature>
<feature type="repeat" description="WD 7">
    <location>
        <begin position="268"/>
        <end position="309"/>
    </location>
</feature>
<feature type="modified residue" description="N-acetylmethionine" evidence="1">
    <location>
        <position position="1"/>
    </location>
</feature>
<feature type="modified residue" description="Phosphothreonine" evidence="1">
    <location>
        <position position="51"/>
    </location>
</feature>
<feature type="cross-link" description="Glycyl lysine isopeptide (Lys-Gly) (interchain with G-Cter in SUMO3)" evidence="1">
    <location>
        <position position="86"/>
    </location>
</feature>
<feature type="cross-link" description="Glycyl lysine isopeptide (Lys-Gly) (interchain with G-Cter in SUMO3)" evidence="1">
    <location>
        <position position="215"/>
    </location>
</feature>
<feature type="cross-link" description="Glycyl lysine isopeptide (Lys-Gly) (interchain with G-Cter in SUMO3)" evidence="1">
    <location>
        <position position="245"/>
    </location>
</feature>
<feature type="cross-link" description="Glycyl lysine isopeptide (Lys-Gly) (interchain with G-Cter in SUMO3)" evidence="1">
    <location>
        <position position="261"/>
    </location>
</feature>
<feature type="cross-link" description="Glycyl lysine isopeptide (Lys-Gly) (interchain with G-Cter in SUMO3); alternate" evidence="1">
    <location>
        <position position="305"/>
    </location>
</feature>
<feature type="cross-link" description="Glycyl lysine isopeptide (Lys-Gly) (interchain with G-Cter in ubiquitin); alternate" evidence="1">
    <location>
        <position position="305"/>
    </location>
</feature>
<feature type="cross-link" description="Glycyl lysine isopeptide (Lys-Gly) (interchain with G-Cter in SUMO1); alternate" evidence="1">
    <location>
        <position position="313"/>
    </location>
</feature>
<feature type="cross-link" description="Glycyl lysine isopeptide (Lys-Gly) (interchain with G-Cter in ubiquitin); alternate" evidence="1">
    <location>
        <position position="313"/>
    </location>
</feature>
<feature type="sequence conflict" description="In Ref. 2; AAH97319." evidence="4" ref="2">
    <original>T</original>
    <variation>A</variation>
    <location>
        <position position="60"/>
    </location>
</feature>
<feature type="sequence conflict" description="In Ref. 2; AAH97319." evidence="4" ref="2">
    <original>TS</original>
    <variation>AI</variation>
    <location>
        <begin position="151"/>
        <end position="152"/>
    </location>
</feature>
<feature type="sequence conflict" description="In Ref. 2; AAH97319." evidence="4" ref="2">
    <original>P</original>
    <variation>S</variation>
    <location>
        <position position="217"/>
    </location>
</feature>
<organism>
    <name type="scientific">Rattus norvegicus</name>
    <name type="common">Rat</name>
    <dbReference type="NCBI Taxonomy" id="10116"/>
    <lineage>
        <taxon>Eukaryota</taxon>
        <taxon>Metazoa</taxon>
        <taxon>Chordata</taxon>
        <taxon>Craniata</taxon>
        <taxon>Vertebrata</taxon>
        <taxon>Euteleostomi</taxon>
        <taxon>Mammalia</taxon>
        <taxon>Eutheria</taxon>
        <taxon>Euarchontoglires</taxon>
        <taxon>Glires</taxon>
        <taxon>Rodentia</taxon>
        <taxon>Myomorpha</taxon>
        <taxon>Muroidea</taxon>
        <taxon>Muridae</taxon>
        <taxon>Murinae</taxon>
        <taxon>Rattus</taxon>
    </lineage>
</organism>
<reference key="1">
    <citation type="journal article" date="2001" name="J. Endocrinol.">
        <title>Insulin regulation of a novel WD-40 repeat protein in adipocytes.</title>
        <authorList>
            <person name="Rodgers B.D."/>
            <person name="Levine M.A."/>
            <person name="Bernier M."/>
            <person name="Montrose-Rafizadeh C."/>
        </authorList>
    </citation>
    <scope>NUCLEOTIDE SEQUENCE [MRNA]</scope>
    <scope>INDUCTION</scope>
    <scope>SUBCELLULAR LOCATION</scope>
    <scope>TISSUE SPECIFICITY</scope>
    <source>
        <strain>Wistar</strain>
        <tissue>Skeletal muscle</tissue>
    </source>
</reference>
<reference key="2">
    <citation type="journal article" date="2004" name="Genome Res.">
        <title>The status, quality, and expansion of the NIH full-length cDNA project: the Mammalian Gene Collection (MGC).</title>
        <authorList>
            <consortium name="The MGC Project Team"/>
        </authorList>
    </citation>
    <scope>NUCLEOTIDE SEQUENCE [LARGE SCALE MRNA]</scope>
    <source>
        <tissue>Testis</tissue>
    </source>
</reference>